<sequence length="332" mass="34727">MPIRVGVIGAGVMGADHIRNLSTTIGGAKVTFVADLDAGRAAAAAPPSARITTDPTELINSSDVDAVVVASHDSTHAGLVLECFEAMTPVLCEKPLAPTLLESLEVVAADADIVAATGASLLSLGFMRRFDPGYVALRQAVQGRVQGEPLMVHCVSRNAAAGPGTTSELAITNSAIHELDIIPWLLGSPVTEVSWQAGKQTSRAEPGLQDPSFMTLRTADGTLTTLELYLNAQYGYTTRCEVVSEQGTTSLQESSLLGIEQDGTRQAVIPADWRPRFADAYRLQLQAWISALAGGEAPSLAGAQDGLNASLVAQAMIQSLHSDGTTTKVSYS</sequence>
<accession>A1R674</accession>
<evidence type="ECO:0000255" key="1">
    <source>
        <dbReference type="HAMAP-Rule" id="MF_01671"/>
    </source>
</evidence>
<organism>
    <name type="scientific">Paenarthrobacter aurescens (strain TC1)</name>
    <dbReference type="NCBI Taxonomy" id="290340"/>
    <lineage>
        <taxon>Bacteria</taxon>
        <taxon>Bacillati</taxon>
        <taxon>Actinomycetota</taxon>
        <taxon>Actinomycetes</taxon>
        <taxon>Micrococcales</taxon>
        <taxon>Micrococcaceae</taxon>
        <taxon>Paenarthrobacter</taxon>
    </lineage>
</organism>
<protein>
    <recommendedName>
        <fullName evidence="1">Inositol 2-dehydrogenase 2</fullName>
        <ecNumber evidence="1">1.1.1.18</ecNumber>
    </recommendedName>
    <alternativeName>
        <fullName evidence="1">Myo-inositol 2-dehydrogenase 2</fullName>
        <shortName evidence="1">MI 2-dehydrogenase 2</shortName>
    </alternativeName>
</protein>
<gene>
    <name evidence="1" type="primary">iolG2</name>
    <name type="ordered locus">AAur_1991</name>
</gene>
<keyword id="KW-0520">NAD</keyword>
<keyword id="KW-0560">Oxidoreductase</keyword>
<proteinExistence type="inferred from homology"/>
<reference key="1">
    <citation type="journal article" date="2006" name="PLoS Genet.">
        <title>Secrets of soil survival revealed by the genome sequence of Arthrobacter aurescens TC1.</title>
        <authorList>
            <person name="Mongodin E.F."/>
            <person name="Shapir N."/>
            <person name="Daugherty S.C."/>
            <person name="DeBoy R.T."/>
            <person name="Emerson J.B."/>
            <person name="Shvartzbeyn A."/>
            <person name="Radune D."/>
            <person name="Vamathevan J."/>
            <person name="Riggs F."/>
            <person name="Grinberg V."/>
            <person name="Khouri H.M."/>
            <person name="Wackett L.P."/>
            <person name="Nelson K.E."/>
            <person name="Sadowsky M.J."/>
        </authorList>
    </citation>
    <scope>NUCLEOTIDE SEQUENCE [LARGE SCALE GENOMIC DNA]</scope>
    <source>
        <strain>TC1</strain>
    </source>
</reference>
<name>IOLG2_PAEAT</name>
<comment type="function">
    <text evidence="1">Involved in the oxidation of myo-inositol (MI) to 2-keto-myo-inositol (2KMI or 2-inosose).</text>
</comment>
<comment type="catalytic activity">
    <reaction evidence="1">
        <text>myo-inositol + NAD(+) = scyllo-inosose + NADH + H(+)</text>
        <dbReference type="Rhea" id="RHEA:16949"/>
        <dbReference type="ChEBI" id="CHEBI:15378"/>
        <dbReference type="ChEBI" id="CHEBI:17268"/>
        <dbReference type="ChEBI" id="CHEBI:17811"/>
        <dbReference type="ChEBI" id="CHEBI:57540"/>
        <dbReference type="ChEBI" id="CHEBI:57945"/>
        <dbReference type="EC" id="1.1.1.18"/>
    </reaction>
</comment>
<comment type="subunit">
    <text evidence="1">Homotetramer.</text>
</comment>
<comment type="similarity">
    <text evidence="1">Belongs to the Gfo/Idh/MocA family.</text>
</comment>
<feature type="chain" id="PRO_0000352552" description="Inositol 2-dehydrogenase 2">
    <location>
        <begin position="1"/>
        <end position="332"/>
    </location>
</feature>
<dbReference type="EC" id="1.1.1.18" evidence="1"/>
<dbReference type="EMBL" id="CP000474">
    <property type="protein sequence ID" value="ABM08382.1"/>
    <property type="molecule type" value="Genomic_DNA"/>
</dbReference>
<dbReference type="RefSeq" id="WP_011774680.1">
    <property type="nucleotide sequence ID" value="NC_008711.1"/>
</dbReference>
<dbReference type="SMR" id="A1R674"/>
<dbReference type="STRING" id="290340.AAur_1991"/>
<dbReference type="KEGG" id="aau:AAur_1991"/>
<dbReference type="eggNOG" id="COG0673">
    <property type="taxonomic scope" value="Bacteria"/>
</dbReference>
<dbReference type="HOGENOM" id="CLU_023194_0_1_11"/>
<dbReference type="OrthoDB" id="256869at2"/>
<dbReference type="Proteomes" id="UP000000637">
    <property type="component" value="Chromosome"/>
</dbReference>
<dbReference type="GO" id="GO:0050112">
    <property type="term" value="F:inositol 2-dehydrogenase (NAD+) activity"/>
    <property type="evidence" value="ECO:0007669"/>
    <property type="project" value="UniProtKB-UniRule"/>
</dbReference>
<dbReference type="GO" id="GO:0000166">
    <property type="term" value="F:nucleotide binding"/>
    <property type="evidence" value="ECO:0007669"/>
    <property type="project" value="InterPro"/>
</dbReference>
<dbReference type="GO" id="GO:0019310">
    <property type="term" value="P:inositol catabolic process"/>
    <property type="evidence" value="ECO:0007669"/>
    <property type="project" value="UniProtKB-UniRule"/>
</dbReference>
<dbReference type="Gene3D" id="3.30.360.10">
    <property type="entry name" value="Dihydrodipicolinate Reductase, domain 2"/>
    <property type="match status" value="1"/>
</dbReference>
<dbReference type="Gene3D" id="3.40.50.720">
    <property type="entry name" value="NAD(P)-binding Rossmann-like Domain"/>
    <property type="match status" value="1"/>
</dbReference>
<dbReference type="HAMAP" id="MF_01671">
    <property type="entry name" value="IolG"/>
    <property type="match status" value="1"/>
</dbReference>
<dbReference type="InterPro" id="IPR004104">
    <property type="entry name" value="Gfo/Idh/MocA-like_OxRdtase_C"/>
</dbReference>
<dbReference type="InterPro" id="IPR000683">
    <property type="entry name" value="Gfo/Idh/MocA-like_OxRdtase_N"/>
</dbReference>
<dbReference type="InterPro" id="IPR023794">
    <property type="entry name" value="MI/DCI_dehydrogenase"/>
</dbReference>
<dbReference type="InterPro" id="IPR036291">
    <property type="entry name" value="NAD(P)-bd_dom_sf"/>
</dbReference>
<dbReference type="PANTHER" id="PTHR42840:SF3">
    <property type="entry name" value="BINDING ROSSMANN FOLD OXIDOREDUCTASE, PUTATIVE (AFU_ORTHOLOGUE AFUA_2G10240)-RELATED"/>
    <property type="match status" value="1"/>
</dbReference>
<dbReference type="PANTHER" id="PTHR42840">
    <property type="entry name" value="NAD(P)-BINDING ROSSMANN-FOLD SUPERFAMILY PROTEIN-RELATED"/>
    <property type="match status" value="1"/>
</dbReference>
<dbReference type="Pfam" id="PF01408">
    <property type="entry name" value="GFO_IDH_MocA"/>
    <property type="match status" value="1"/>
</dbReference>
<dbReference type="Pfam" id="PF02894">
    <property type="entry name" value="GFO_IDH_MocA_C"/>
    <property type="match status" value="1"/>
</dbReference>
<dbReference type="SUPFAM" id="SSF55347">
    <property type="entry name" value="Glyceraldehyde-3-phosphate dehydrogenase-like, C-terminal domain"/>
    <property type="match status" value="1"/>
</dbReference>
<dbReference type="SUPFAM" id="SSF51735">
    <property type="entry name" value="NAD(P)-binding Rossmann-fold domains"/>
    <property type="match status" value="1"/>
</dbReference>